<dbReference type="EMBL" id="U61765">
    <property type="protein sequence ID" value="AAB62985.1"/>
    <property type="molecule type" value="Genomic_DNA"/>
</dbReference>
<dbReference type="EMBL" id="AJ248287">
    <property type="protein sequence ID" value="CAB50231.1"/>
    <property type="molecule type" value="Genomic_DNA"/>
</dbReference>
<dbReference type="EMBL" id="HE613800">
    <property type="protein sequence ID" value="CCE70768.1"/>
    <property type="molecule type" value="Genomic_DNA"/>
</dbReference>
<dbReference type="PIR" id="B75042">
    <property type="entry name" value="B75042"/>
</dbReference>
<dbReference type="RefSeq" id="WP_010868441.1">
    <property type="nucleotide sequence ID" value="NC_000868.1"/>
</dbReference>
<dbReference type="SMR" id="P77919"/>
<dbReference type="STRING" id="272844.PAB1499"/>
<dbReference type="KEGG" id="pab:PAB1499"/>
<dbReference type="PATRIC" id="fig|272844.11.peg.1411"/>
<dbReference type="eggNOG" id="arCOG04229">
    <property type="taxonomic scope" value="Archaea"/>
</dbReference>
<dbReference type="HOGENOM" id="CLU_128576_0_0_2"/>
<dbReference type="OrthoDB" id="7000at2157"/>
<dbReference type="PhylomeDB" id="P77919"/>
<dbReference type="Proteomes" id="UP000000810">
    <property type="component" value="Chromosome"/>
</dbReference>
<dbReference type="Proteomes" id="UP000009139">
    <property type="component" value="Chromosome"/>
</dbReference>
<dbReference type="GO" id="GO:0009347">
    <property type="term" value="C:aspartate carbamoyltransferase complex"/>
    <property type="evidence" value="ECO:0007669"/>
    <property type="project" value="InterPro"/>
</dbReference>
<dbReference type="GO" id="GO:0046872">
    <property type="term" value="F:metal ion binding"/>
    <property type="evidence" value="ECO:0007669"/>
    <property type="project" value="UniProtKB-KW"/>
</dbReference>
<dbReference type="GO" id="GO:0006207">
    <property type="term" value="P:'de novo' pyrimidine nucleobase biosynthetic process"/>
    <property type="evidence" value="ECO:0007669"/>
    <property type="project" value="InterPro"/>
</dbReference>
<dbReference type="GO" id="GO:0006221">
    <property type="term" value="P:pyrimidine nucleotide biosynthetic process"/>
    <property type="evidence" value="ECO:0007669"/>
    <property type="project" value="UniProtKB-UniRule"/>
</dbReference>
<dbReference type="Gene3D" id="2.30.30.20">
    <property type="entry name" value="Aspartate carbamoyltransferase regulatory subunit, C-terminal domain"/>
    <property type="match status" value="1"/>
</dbReference>
<dbReference type="Gene3D" id="3.30.70.140">
    <property type="entry name" value="Aspartate carbamoyltransferase regulatory subunit, N-terminal domain"/>
    <property type="match status" value="1"/>
</dbReference>
<dbReference type="HAMAP" id="MF_00002">
    <property type="entry name" value="Asp_carb_tr_reg"/>
    <property type="match status" value="1"/>
</dbReference>
<dbReference type="InterPro" id="IPR020545">
    <property type="entry name" value="Asp_carbamoyltransf_reg_N"/>
</dbReference>
<dbReference type="InterPro" id="IPR002801">
    <property type="entry name" value="Asp_carbamoylTrfase_reg"/>
</dbReference>
<dbReference type="InterPro" id="IPR020542">
    <property type="entry name" value="Asp_carbamoyltrfase_reg_C"/>
</dbReference>
<dbReference type="InterPro" id="IPR036792">
    <property type="entry name" value="Asp_carbatrfase_reg_C_sf"/>
</dbReference>
<dbReference type="InterPro" id="IPR036793">
    <property type="entry name" value="Asp_carbatrfase_reg_N_sf"/>
</dbReference>
<dbReference type="NCBIfam" id="TIGR00240">
    <property type="entry name" value="ATCase_reg"/>
    <property type="match status" value="1"/>
</dbReference>
<dbReference type="PANTHER" id="PTHR35805">
    <property type="entry name" value="ASPARTATE CARBAMOYLTRANSFERASE REGULATORY CHAIN"/>
    <property type="match status" value="1"/>
</dbReference>
<dbReference type="PANTHER" id="PTHR35805:SF1">
    <property type="entry name" value="ASPARTATE CARBAMOYLTRANSFERASE REGULATORY CHAIN"/>
    <property type="match status" value="1"/>
</dbReference>
<dbReference type="Pfam" id="PF01948">
    <property type="entry name" value="PyrI"/>
    <property type="match status" value="1"/>
</dbReference>
<dbReference type="Pfam" id="PF02748">
    <property type="entry name" value="PyrI_C"/>
    <property type="match status" value="1"/>
</dbReference>
<dbReference type="SUPFAM" id="SSF57825">
    <property type="entry name" value="Aspartate carbamoyltransferase, Regulatory-chain, C-terminal domain"/>
    <property type="match status" value="1"/>
</dbReference>
<dbReference type="SUPFAM" id="SSF54893">
    <property type="entry name" value="Aspartate carbamoyltransferase, Regulatory-chain, N-terminal domain"/>
    <property type="match status" value="1"/>
</dbReference>
<accession>P77919</accession>
<accession>G8ZHD1</accession>
<sequence>MAELKVSAIKEGTVIDHIPAGKGLKVIEILKLGKLTNGGAVLLAMNVPSKKLGRKDIVKVEGRFLSEEEVNKIALVAPNATVNIIRDYKVVEKFKVEVPDVIEGILRCGNPNCITNHEYVTTKFYVISREPLKVRCHYCERTMEEEEILANL</sequence>
<feature type="chain" id="PRO_0000142337" description="Aspartate carbamoyltransferase regulatory chain">
    <location>
        <begin position="1"/>
        <end position="152"/>
    </location>
</feature>
<feature type="binding site" evidence="1">
    <location>
        <position position="108"/>
    </location>
    <ligand>
        <name>Zn(2+)</name>
        <dbReference type="ChEBI" id="CHEBI:29105"/>
    </ligand>
</feature>
<feature type="binding site" evidence="1">
    <location>
        <position position="113"/>
    </location>
    <ligand>
        <name>Zn(2+)</name>
        <dbReference type="ChEBI" id="CHEBI:29105"/>
    </ligand>
</feature>
<feature type="binding site" evidence="1">
    <location>
        <position position="136"/>
    </location>
    <ligand>
        <name>Zn(2+)</name>
        <dbReference type="ChEBI" id="CHEBI:29105"/>
    </ligand>
</feature>
<feature type="binding site" evidence="1">
    <location>
        <position position="139"/>
    </location>
    <ligand>
        <name>Zn(2+)</name>
        <dbReference type="ChEBI" id="CHEBI:29105"/>
    </ligand>
</feature>
<evidence type="ECO:0000250" key="1"/>
<evidence type="ECO:0000305" key="2"/>
<proteinExistence type="inferred from homology"/>
<comment type="function">
    <text evidence="1">Involved in allosteric regulation of aspartate carbamoyltransferase.</text>
</comment>
<comment type="cofactor">
    <cofactor evidence="1">
        <name>Zn(2+)</name>
        <dbReference type="ChEBI" id="CHEBI:29105"/>
    </cofactor>
    <text evidence="1">Binds 1 zinc ion per subunit.</text>
</comment>
<comment type="subunit">
    <text evidence="1">Contains catalytic and regulatory chains.</text>
</comment>
<comment type="similarity">
    <text evidence="2">Belongs to the PyrI family.</text>
</comment>
<keyword id="KW-0479">Metal-binding</keyword>
<keyword id="KW-0665">Pyrimidine biosynthesis</keyword>
<keyword id="KW-0862">Zinc</keyword>
<protein>
    <recommendedName>
        <fullName>Aspartate carbamoyltransferase regulatory chain</fullName>
    </recommendedName>
</protein>
<reference key="1">
    <citation type="journal article" date="1997" name="J. Bacteriol.">
        <title>Aspartate transcarbamylase from the deep-sea hyperthermophilic archaeon Pyrococcus abyssi: genetic organization, structure, and expression in Escherichia coli.</title>
        <authorList>
            <person name="Purcarea C."/>
            <person name="Herve G."/>
            <person name="Ladjimi M.M."/>
            <person name="Cunin R."/>
        </authorList>
    </citation>
    <scope>NUCLEOTIDE SEQUENCE [GENOMIC DNA]</scope>
    <source>
        <strain>GE5 / Orsay</strain>
    </source>
</reference>
<reference key="2">
    <citation type="journal article" date="2003" name="Mol. Microbiol.">
        <title>An integrated analysis of the genome of the hyperthermophilic archaeon Pyrococcus abyssi.</title>
        <authorList>
            <person name="Cohen G.N."/>
            <person name="Barbe V."/>
            <person name="Flament D."/>
            <person name="Galperin M."/>
            <person name="Heilig R."/>
            <person name="Lecompte O."/>
            <person name="Poch O."/>
            <person name="Prieur D."/>
            <person name="Querellou J."/>
            <person name="Ripp R."/>
            <person name="Thierry J.-C."/>
            <person name="Van der Oost J."/>
            <person name="Weissenbach J."/>
            <person name="Zivanovic Y."/>
            <person name="Forterre P."/>
        </authorList>
    </citation>
    <scope>NUCLEOTIDE SEQUENCE [LARGE SCALE GENOMIC DNA]</scope>
    <source>
        <strain>GE5 / Orsay</strain>
    </source>
</reference>
<reference key="3">
    <citation type="journal article" date="2012" name="Curr. Microbiol.">
        <title>Re-annotation of two hyperthermophilic archaea Pyrococcus abyssi GE5 and Pyrococcus furiosus DSM 3638.</title>
        <authorList>
            <person name="Gao J."/>
            <person name="Wang J."/>
        </authorList>
    </citation>
    <scope>GENOME REANNOTATION</scope>
    <source>
        <strain>GE5 / Orsay</strain>
    </source>
</reference>
<name>PYRI_PYRAB</name>
<gene>
    <name type="primary">pyrI</name>
    <name type="ordered locus">PYRAB13260</name>
    <name type="ORF">PAB1499</name>
</gene>
<organism>
    <name type="scientific">Pyrococcus abyssi (strain GE5 / Orsay)</name>
    <dbReference type="NCBI Taxonomy" id="272844"/>
    <lineage>
        <taxon>Archaea</taxon>
        <taxon>Methanobacteriati</taxon>
        <taxon>Methanobacteriota</taxon>
        <taxon>Thermococci</taxon>
        <taxon>Thermococcales</taxon>
        <taxon>Thermococcaceae</taxon>
        <taxon>Pyrococcus</taxon>
    </lineage>
</organism>